<reference key="1">
    <citation type="journal article" date="2008" name="J. Bacteriol.">
        <title>Complete genome sequence of Leuconostoc citreum KM20.</title>
        <authorList>
            <person name="Kim J.F."/>
            <person name="Jeong H."/>
            <person name="Lee J.-S."/>
            <person name="Choi S.-H."/>
            <person name="Ha M."/>
            <person name="Hur C.-G."/>
            <person name="Kim J.-S."/>
            <person name="Lee S."/>
            <person name="Park H.-S."/>
            <person name="Park Y.-H."/>
            <person name="Oh T.K."/>
        </authorList>
    </citation>
    <scope>NUCLEOTIDE SEQUENCE [LARGE SCALE GENOMIC DNA]</scope>
    <source>
        <strain>KM20</strain>
    </source>
</reference>
<name>DAPA_LEUCK</name>
<evidence type="ECO:0000255" key="1">
    <source>
        <dbReference type="HAMAP-Rule" id="MF_00418"/>
    </source>
</evidence>
<evidence type="ECO:0000305" key="2"/>
<dbReference type="EC" id="4.3.3.7" evidence="1"/>
<dbReference type="EMBL" id="DQ489736">
    <property type="protein sequence ID" value="ACA82980.1"/>
    <property type="molecule type" value="Genomic_DNA"/>
</dbReference>
<dbReference type="RefSeq" id="WP_004908923.1">
    <property type="nucleotide sequence ID" value="NC_010471.1"/>
</dbReference>
<dbReference type="SMR" id="B1MZM8"/>
<dbReference type="STRING" id="349519.LCK_01153"/>
<dbReference type="KEGG" id="lci:LCK_01153"/>
<dbReference type="eggNOG" id="COG0329">
    <property type="taxonomic scope" value="Bacteria"/>
</dbReference>
<dbReference type="HOGENOM" id="CLU_049343_7_1_9"/>
<dbReference type="OrthoDB" id="9782828at2"/>
<dbReference type="UniPathway" id="UPA00034">
    <property type="reaction ID" value="UER00017"/>
</dbReference>
<dbReference type="Proteomes" id="UP000002166">
    <property type="component" value="Chromosome"/>
</dbReference>
<dbReference type="GO" id="GO:0005829">
    <property type="term" value="C:cytosol"/>
    <property type="evidence" value="ECO:0007669"/>
    <property type="project" value="TreeGrafter"/>
</dbReference>
<dbReference type="GO" id="GO:0008840">
    <property type="term" value="F:4-hydroxy-tetrahydrodipicolinate synthase activity"/>
    <property type="evidence" value="ECO:0007669"/>
    <property type="project" value="UniProtKB-UniRule"/>
</dbReference>
<dbReference type="GO" id="GO:0019877">
    <property type="term" value="P:diaminopimelate biosynthetic process"/>
    <property type="evidence" value="ECO:0007669"/>
    <property type="project" value="UniProtKB-UniRule"/>
</dbReference>
<dbReference type="GO" id="GO:0009089">
    <property type="term" value="P:lysine biosynthetic process via diaminopimelate"/>
    <property type="evidence" value="ECO:0007669"/>
    <property type="project" value="UniProtKB-UniRule"/>
</dbReference>
<dbReference type="CDD" id="cd00950">
    <property type="entry name" value="DHDPS"/>
    <property type="match status" value="1"/>
</dbReference>
<dbReference type="Gene3D" id="3.20.20.70">
    <property type="entry name" value="Aldolase class I"/>
    <property type="match status" value="1"/>
</dbReference>
<dbReference type="HAMAP" id="MF_00418">
    <property type="entry name" value="DapA"/>
    <property type="match status" value="1"/>
</dbReference>
<dbReference type="InterPro" id="IPR013785">
    <property type="entry name" value="Aldolase_TIM"/>
</dbReference>
<dbReference type="InterPro" id="IPR005263">
    <property type="entry name" value="DapA"/>
</dbReference>
<dbReference type="InterPro" id="IPR002220">
    <property type="entry name" value="DapA-like"/>
</dbReference>
<dbReference type="InterPro" id="IPR020625">
    <property type="entry name" value="Schiff_base-form_aldolases_AS"/>
</dbReference>
<dbReference type="InterPro" id="IPR020624">
    <property type="entry name" value="Schiff_base-form_aldolases_CS"/>
</dbReference>
<dbReference type="NCBIfam" id="TIGR00674">
    <property type="entry name" value="dapA"/>
    <property type="match status" value="1"/>
</dbReference>
<dbReference type="PANTHER" id="PTHR12128:SF66">
    <property type="entry name" value="4-HYDROXY-2-OXOGLUTARATE ALDOLASE, MITOCHONDRIAL"/>
    <property type="match status" value="1"/>
</dbReference>
<dbReference type="PANTHER" id="PTHR12128">
    <property type="entry name" value="DIHYDRODIPICOLINATE SYNTHASE"/>
    <property type="match status" value="1"/>
</dbReference>
<dbReference type="Pfam" id="PF00701">
    <property type="entry name" value="DHDPS"/>
    <property type="match status" value="1"/>
</dbReference>
<dbReference type="PIRSF" id="PIRSF001365">
    <property type="entry name" value="DHDPS"/>
    <property type="match status" value="1"/>
</dbReference>
<dbReference type="PRINTS" id="PR00146">
    <property type="entry name" value="DHPICSNTHASE"/>
</dbReference>
<dbReference type="SMART" id="SM01130">
    <property type="entry name" value="DHDPS"/>
    <property type="match status" value="1"/>
</dbReference>
<dbReference type="SUPFAM" id="SSF51569">
    <property type="entry name" value="Aldolase"/>
    <property type="match status" value="1"/>
</dbReference>
<dbReference type="PROSITE" id="PS00665">
    <property type="entry name" value="DHDPS_1"/>
    <property type="match status" value="1"/>
</dbReference>
<dbReference type="PROSITE" id="PS00666">
    <property type="entry name" value="DHDPS_2"/>
    <property type="match status" value="1"/>
</dbReference>
<gene>
    <name evidence="1" type="primary">dapA</name>
    <name type="ordered locus">LCK_01153</name>
</gene>
<organism>
    <name type="scientific">Leuconostoc citreum (strain KM20)</name>
    <dbReference type="NCBI Taxonomy" id="349519"/>
    <lineage>
        <taxon>Bacteria</taxon>
        <taxon>Bacillati</taxon>
        <taxon>Bacillota</taxon>
        <taxon>Bacilli</taxon>
        <taxon>Lactobacillales</taxon>
        <taxon>Lactobacillaceae</taxon>
        <taxon>Leuconostoc</taxon>
    </lineage>
</organism>
<proteinExistence type="inferred from homology"/>
<comment type="function">
    <text evidence="1">Catalyzes the condensation of (S)-aspartate-beta-semialdehyde [(S)-ASA] and pyruvate to 4-hydroxy-tetrahydrodipicolinate (HTPA).</text>
</comment>
<comment type="catalytic activity">
    <reaction evidence="1">
        <text>L-aspartate 4-semialdehyde + pyruvate = (2S,4S)-4-hydroxy-2,3,4,5-tetrahydrodipicolinate + H2O + H(+)</text>
        <dbReference type="Rhea" id="RHEA:34171"/>
        <dbReference type="ChEBI" id="CHEBI:15361"/>
        <dbReference type="ChEBI" id="CHEBI:15377"/>
        <dbReference type="ChEBI" id="CHEBI:15378"/>
        <dbReference type="ChEBI" id="CHEBI:67139"/>
        <dbReference type="ChEBI" id="CHEBI:537519"/>
        <dbReference type="EC" id="4.3.3.7"/>
    </reaction>
</comment>
<comment type="pathway">
    <text evidence="1">Amino-acid biosynthesis; L-lysine biosynthesis via DAP pathway; (S)-tetrahydrodipicolinate from L-aspartate: step 3/4.</text>
</comment>
<comment type="subunit">
    <text evidence="1">Homotetramer; dimer of dimers.</text>
</comment>
<comment type="subcellular location">
    <subcellularLocation>
        <location evidence="1">Cytoplasm</location>
    </subcellularLocation>
</comment>
<comment type="similarity">
    <text evidence="1">Belongs to the DapA family.</text>
</comment>
<comment type="caution">
    <text evidence="2">Was originally thought to be a dihydrodipicolinate synthase (DHDPS), catalyzing the condensation of (S)-aspartate-beta-semialdehyde [(S)-ASA] and pyruvate to dihydrodipicolinate (DHDP). However, it was shown in E.coli that the product of the enzymatic reaction is not dihydrodipicolinate but in fact (4S)-4-hydroxy-2,3,4,5-tetrahydro-(2S)-dipicolinic acid (HTPA), and that the consecutive dehydration reaction leading to DHDP is not spontaneous but catalyzed by DapB.</text>
</comment>
<feature type="chain" id="PRO_0000340965" description="4-hydroxy-tetrahydrodipicolinate synthase">
    <location>
        <begin position="1"/>
        <end position="291"/>
    </location>
</feature>
<feature type="active site" description="Proton donor/acceptor" evidence="1">
    <location>
        <position position="136"/>
    </location>
</feature>
<feature type="active site" description="Schiff-base intermediate with substrate" evidence="1">
    <location>
        <position position="164"/>
    </location>
</feature>
<feature type="binding site" evidence="1">
    <location>
        <position position="47"/>
    </location>
    <ligand>
        <name>pyruvate</name>
        <dbReference type="ChEBI" id="CHEBI:15361"/>
    </ligand>
</feature>
<feature type="binding site" evidence="1">
    <location>
        <position position="206"/>
    </location>
    <ligand>
        <name>pyruvate</name>
        <dbReference type="ChEBI" id="CHEBI:15361"/>
    </ligand>
</feature>
<feature type="site" description="Part of a proton relay during catalysis" evidence="1">
    <location>
        <position position="46"/>
    </location>
</feature>
<feature type="site" description="Part of a proton relay during catalysis" evidence="1">
    <location>
        <position position="110"/>
    </location>
</feature>
<keyword id="KW-0028">Amino-acid biosynthesis</keyword>
<keyword id="KW-0963">Cytoplasm</keyword>
<keyword id="KW-0220">Diaminopimelate biosynthesis</keyword>
<keyword id="KW-0456">Lyase</keyword>
<keyword id="KW-0457">Lysine biosynthesis</keyword>
<keyword id="KW-1185">Reference proteome</keyword>
<keyword id="KW-0704">Schiff base</keyword>
<sequence length="291" mass="31498">MYEHINLITAIITPFNAENEIDYPALDRVIDHLLETGTQGLVIAGTTGESPTLSHEEKLALTQHIAAYVPVDTLLIANAGTNNTVESVRNARELSEIPNVDAILAVTPYYNKPNQRGMIAHFTAIADASNRPVMLYNIPGRSAVGLTVDSVVTLAQHPNINAIKETTSVAFIAAEIEQTQNDDFAVYTGEDAQTLAAFVHGGAGTISVASHLYGREMSALFTALAVGDWQEAGVLQRYLTPKMNALFAFPSPAPVKAKLHDLDMVENLTRQPILPLNVAEKKALDKLLEDM</sequence>
<accession>B1MZM8</accession>
<protein>
    <recommendedName>
        <fullName evidence="1">4-hydroxy-tetrahydrodipicolinate synthase</fullName>
        <shortName evidence="1">HTPA synthase</shortName>
        <ecNumber evidence="1">4.3.3.7</ecNumber>
    </recommendedName>
</protein>